<comment type="function">
    <text evidence="1">Could be a nuclease involved in processing of the 5'-end of pre-16S rRNA.</text>
</comment>
<comment type="subcellular location">
    <subcellularLocation>
        <location evidence="1">Cytoplasm</location>
    </subcellularLocation>
</comment>
<comment type="similarity">
    <text evidence="1">Belongs to the YqgF nuclease family.</text>
</comment>
<sequence>MIIIALDFGTKNIGVAVGQNYTNTARSLPSIKVKNKKLNIEKLNKLIDEWKPNAIVVGHPLNIDGTKQKITQCSENFSKKLKNIFKIPILLHDERLSTVEAKAILFEKYGYKSLKKERIDSMSAVIILESWFLYSKN</sequence>
<feature type="chain" id="PRO_0000172036" description="Putative pre-16S rRNA nuclease">
    <location>
        <begin position="1"/>
        <end position="137"/>
    </location>
</feature>
<reference key="1">
    <citation type="journal article" date="2003" name="Proc. Natl. Acad. Sci. U.S.A.">
        <title>Reductive genome evolution in Buchnera aphidicola.</title>
        <authorList>
            <person name="van Ham R.C.H.J."/>
            <person name="Kamerbeek J."/>
            <person name="Palacios C."/>
            <person name="Rausell C."/>
            <person name="Abascal F."/>
            <person name="Bastolla U."/>
            <person name="Fernandez J.M."/>
            <person name="Jimenez L."/>
            <person name="Postigo M."/>
            <person name="Silva F.J."/>
            <person name="Tamames J."/>
            <person name="Viguera E."/>
            <person name="Latorre A."/>
            <person name="Valencia A."/>
            <person name="Moran F."/>
            <person name="Moya A."/>
        </authorList>
    </citation>
    <scope>NUCLEOTIDE SEQUENCE [LARGE SCALE GENOMIC DNA]</scope>
    <source>
        <strain>Bp</strain>
    </source>
</reference>
<gene>
    <name evidence="1" type="primary">yqgF</name>
    <name type="ordered locus">bbp_492</name>
</gene>
<organism>
    <name type="scientific">Buchnera aphidicola subsp. Baizongia pistaciae (strain Bp)</name>
    <dbReference type="NCBI Taxonomy" id="224915"/>
    <lineage>
        <taxon>Bacteria</taxon>
        <taxon>Pseudomonadati</taxon>
        <taxon>Pseudomonadota</taxon>
        <taxon>Gammaproteobacteria</taxon>
        <taxon>Enterobacterales</taxon>
        <taxon>Erwiniaceae</taxon>
        <taxon>Buchnera</taxon>
    </lineage>
</organism>
<keyword id="KW-0963">Cytoplasm</keyword>
<keyword id="KW-0378">Hydrolase</keyword>
<keyword id="KW-0540">Nuclease</keyword>
<keyword id="KW-1185">Reference proteome</keyword>
<keyword id="KW-0690">Ribosome biogenesis</keyword>
<accession>Q89A50</accession>
<name>YQGF_BUCBP</name>
<proteinExistence type="inferred from homology"/>
<dbReference type="EC" id="3.1.-.-" evidence="1"/>
<dbReference type="EMBL" id="AE016826">
    <property type="protein sequence ID" value="AAO27197.1"/>
    <property type="molecule type" value="Genomic_DNA"/>
</dbReference>
<dbReference type="RefSeq" id="WP_011091598.1">
    <property type="nucleotide sequence ID" value="NC_004545.1"/>
</dbReference>
<dbReference type="SMR" id="Q89A50"/>
<dbReference type="STRING" id="224915.bbp_492"/>
<dbReference type="KEGG" id="bab:bbp_492"/>
<dbReference type="eggNOG" id="COG0816">
    <property type="taxonomic scope" value="Bacteria"/>
</dbReference>
<dbReference type="HOGENOM" id="CLU_098240_3_0_6"/>
<dbReference type="OrthoDB" id="9796140at2"/>
<dbReference type="Proteomes" id="UP000000601">
    <property type="component" value="Chromosome"/>
</dbReference>
<dbReference type="GO" id="GO:0005829">
    <property type="term" value="C:cytosol"/>
    <property type="evidence" value="ECO:0007669"/>
    <property type="project" value="TreeGrafter"/>
</dbReference>
<dbReference type="GO" id="GO:0004518">
    <property type="term" value="F:nuclease activity"/>
    <property type="evidence" value="ECO:0007669"/>
    <property type="project" value="UniProtKB-KW"/>
</dbReference>
<dbReference type="GO" id="GO:0000967">
    <property type="term" value="P:rRNA 5'-end processing"/>
    <property type="evidence" value="ECO:0007669"/>
    <property type="project" value="UniProtKB-UniRule"/>
</dbReference>
<dbReference type="CDD" id="cd16964">
    <property type="entry name" value="YqgF"/>
    <property type="match status" value="1"/>
</dbReference>
<dbReference type="Gene3D" id="3.30.420.140">
    <property type="entry name" value="YqgF/RNase H-like domain"/>
    <property type="match status" value="1"/>
</dbReference>
<dbReference type="HAMAP" id="MF_00651">
    <property type="entry name" value="Nuclease_YqgF"/>
    <property type="match status" value="1"/>
</dbReference>
<dbReference type="InterPro" id="IPR012337">
    <property type="entry name" value="RNaseH-like_sf"/>
</dbReference>
<dbReference type="InterPro" id="IPR005227">
    <property type="entry name" value="YqgF"/>
</dbReference>
<dbReference type="InterPro" id="IPR006641">
    <property type="entry name" value="YqgF/RNaseH-like_dom"/>
</dbReference>
<dbReference type="InterPro" id="IPR037027">
    <property type="entry name" value="YqgF/RNaseH-like_dom_sf"/>
</dbReference>
<dbReference type="NCBIfam" id="TIGR00250">
    <property type="entry name" value="RNAse_H_YqgF"/>
    <property type="match status" value="1"/>
</dbReference>
<dbReference type="PANTHER" id="PTHR33317">
    <property type="entry name" value="POLYNUCLEOTIDYL TRANSFERASE, RIBONUCLEASE H-LIKE SUPERFAMILY PROTEIN"/>
    <property type="match status" value="1"/>
</dbReference>
<dbReference type="PANTHER" id="PTHR33317:SF4">
    <property type="entry name" value="POLYNUCLEOTIDYL TRANSFERASE, RIBONUCLEASE H-LIKE SUPERFAMILY PROTEIN"/>
    <property type="match status" value="1"/>
</dbReference>
<dbReference type="Pfam" id="PF03652">
    <property type="entry name" value="RuvX"/>
    <property type="match status" value="1"/>
</dbReference>
<dbReference type="SMART" id="SM00732">
    <property type="entry name" value="YqgFc"/>
    <property type="match status" value="1"/>
</dbReference>
<dbReference type="SUPFAM" id="SSF53098">
    <property type="entry name" value="Ribonuclease H-like"/>
    <property type="match status" value="1"/>
</dbReference>
<protein>
    <recommendedName>
        <fullName evidence="1">Putative pre-16S rRNA nuclease</fullName>
        <ecNumber evidence="1">3.1.-.-</ecNumber>
    </recommendedName>
</protein>
<evidence type="ECO:0000255" key="1">
    <source>
        <dbReference type="HAMAP-Rule" id="MF_00651"/>
    </source>
</evidence>